<evidence type="ECO:0000255" key="1">
    <source>
        <dbReference type="HAMAP-Rule" id="MF_00480"/>
    </source>
</evidence>
<evidence type="ECO:0000305" key="2"/>
<name>RS7_GLUOX</name>
<keyword id="KW-1185">Reference proteome</keyword>
<keyword id="KW-0687">Ribonucleoprotein</keyword>
<keyword id="KW-0689">Ribosomal protein</keyword>
<keyword id="KW-0694">RNA-binding</keyword>
<keyword id="KW-0699">rRNA-binding</keyword>
<keyword id="KW-0820">tRNA-binding</keyword>
<accession>Q5FTY0</accession>
<feature type="chain" id="PRO_0000226503" description="Small ribosomal subunit protein uS7">
    <location>
        <begin position="1"/>
        <end position="158"/>
    </location>
</feature>
<reference key="1">
    <citation type="journal article" date="2005" name="Nat. Biotechnol.">
        <title>Complete genome sequence of the acetic acid bacterium Gluconobacter oxydans.</title>
        <authorList>
            <person name="Prust C."/>
            <person name="Hoffmeister M."/>
            <person name="Liesegang H."/>
            <person name="Wiezer A."/>
            <person name="Fricke W.F."/>
            <person name="Ehrenreich A."/>
            <person name="Gottschalk G."/>
            <person name="Deppenmeier U."/>
        </authorList>
    </citation>
    <scope>NUCLEOTIDE SEQUENCE [LARGE SCALE GENOMIC DNA]</scope>
    <source>
        <strain>621H</strain>
    </source>
</reference>
<dbReference type="EMBL" id="CP000009">
    <property type="protein sequence ID" value="AAW60166.1"/>
    <property type="molecule type" value="Genomic_DNA"/>
</dbReference>
<dbReference type="RefSeq" id="WP_011251968.1">
    <property type="nucleotide sequence ID" value="NZ_LT900338.1"/>
</dbReference>
<dbReference type="SMR" id="Q5FTY0"/>
<dbReference type="STRING" id="290633.GOX0383"/>
<dbReference type="GeneID" id="76195085"/>
<dbReference type="KEGG" id="gox:GOX0383"/>
<dbReference type="eggNOG" id="COG0049">
    <property type="taxonomic scope" value="Bacteria"/>
</dbReference>
<dbReference type="HOGENOM" id="CLU_072226_1_1_5"/>
<dbReference type="Proteomes" id="UP000006375">
    <property type="component" value="Chromosome"/>
</dbReference>
<dbReference type="GO" id="GO:0015935">
    <property type="term" value="C:small ribosomal subunit"/>
    <property type="evidence" value="ECO:0007669"/>
    <property type="project" value="InterPro"/>
</dbReference>
<dbReference type="GO" id="GO:0019843">
    <property type="term" value="F:rRNA binding"/>
    <property type="evidence" value="ECO:0007669"/>
    <property type="project" value="UniProtKB-UniRule"/>
</dbReference>
<dbReference type="GO" id="GO:0003735">
    <property type="term" value="F:structural constituent of ribosome"/>
    <property type="evidence" value="ECO:0007669"/>
    <property type="project" value="InterPro"/>
</dbReference>
<dbReference type="GO" id="GO:0000049">
    <property type="term" value="F:tRNA binding"/>
    <property type="evidence" value="ECO:0007669"/>
    <property type="project" value="UniProtKB-UniRule"/>
</dbReference>
<dbReference type="GO" id="GO:0006412">
    <property type="term" value="P:translation"/>
    <property type="evidence" value="ECO:0007669"/>
    <property type="project" value="UniProtKB-UniRule"/>
</dbReference>
<dbReference type="CDD" id="cd14869">
    <property type="entry name" value="uS7_Bacteria"/>
    <property type="match status" value="1"/>
</dbReference>
<dbReference type="FunFam" id="1.10.455.10:FF:000001">
    <property type="entry name" value="30S ribosomal protein S7"/>
    <property type="match status" value="1"/>
</dbReference>
<dbReference type="Gene3D" id="1.10.455.10">
    <property type="entry name" value="Ribosomal protein S7 domain"/>
    <property type="match status" value="1"/>
</dbReference>
<dbReference type="HAMAP" id="MF_00480_B">
    <property type="entry name" value="Ribosomal_uS7_B"/>
    <property type="match status" value="1"/>
</dbReference>
<dbReference type="InterPro" id="IPR000235">
    <property type="entry name" value="Ribosomal_uS7"/>
</dbReference>
<dbReference type="InterPro" id="IPR005717">
    <property type="entry name" value="Ribosomal_uS7_bac/org-type"/>
</dbReference>
<dbReference type="InterPro" id="IPR020606">
    <property type="entry name" value="Ribosomal_uS7_CS"/>
</dbReference>
<dbReference type="InterPro" id="IPR023798">
    <property type="entry name" value="Ribosomal_uS7_dom"/>
</dbReference>
<dbReference type="InterPro" id="IPR036823">
    <property type="entry name" value="Ribosomal_uS7_dom_sf"/>
</dbReference>
<dbReference type="NCBIfam" id="TIGR01029">
    <property type="entry name" value="rpsG_bact"/>
    <property type="match status" value="1"/>
</dbReference>
<dbReference type="PANTHER" id="PTHR11205">
    <property type="entry name" value="RIBOSOMAL PROTEIN S7"/>
    <property type="match status" value="1"/>
</dbReference>
<dbReference type="Pfam" id="PF00177">
    <property type="entry name" value="Ribosomal_S7"/>
    <property type="match status" value="1"/>
</dbReference>
<dbReference type="PIRSF" id="PIRSF002122">
    <property type="entry name" value="RPS7p_RPS7a_RPS5e_RPS7o"/>
    <property type="match status" value="1"/>
</dbReference>
<dbReference type="SUPFAM" id="SSF47973">
    <property type="entry name" value="Ribosomal protein S7"/>
    <property type="match status" value="1"/>
</dbReference>
<dbReference type="PROSITE" id="PS00052">
    <property type="entry name" value="RIBOSOMAL_S7"/>
    <property type="match status" value="1"/>
</dbReference>
<protein>
    <recommendedName>
        <fullName evidence="1">Small ribosomal subunit protein uS7</fullName>
    </recommendedName>
    <alternativeName>
        <fullName evidence="2">30S ribosomal protein S7</fullName>
    </alternativeName>
</protein>
<comment type="function">
    <text evidence="1">One of the primary rRNA binding proteins, it binds directly to 16S rRNA where it nucleates assembly of the head domain of the 30S subunit. Is located at the subunit interface close to the decoding center, probably blocks exit of the E-site tRNA.</text>
</comment>
<comment type="subunit">
    <text evidence="1">Part of the 30S ribosomal subunit. Contacts proteins S9 and S11.</text>
</comment>
<comment type="similarity">
    <text evidence="1">Belongs to the universal ribosomal protein uS7 family.</text>
</comment>
<organism>
    <name type="scientific">Gluconobacter oxydans (strain 621H)</name>
    <name type="common">Gluconobacter suboxydans</name>
    <dbReference type="NCBI Taxonomy" id="290633"/>
    <lineage>
        <taxon>Bacteria</taxon>
        <taxon>Pseudomonadati</taxon>
        <taxon>Pseudomonadota</taxon>
        <taxon>Alphaproteobacteria</taxon>
        <taxon>Acetobacterales</taxon>
        <taxon>Acetobacteraceae</taxon>
        <taxon>Gluconobacter</taxon>
    </lineage>
</organism>
<proteinExistence type="inferred from homology"/>
<sequence length="158" mass="18042">MSRRHRAVKREILPDPKFGDVVITRFMNALMYDGKKSTAEGIVYGALEVMRRRGGTTADPVAMFHSALDNVKPAVEVRSRRVGGATYQVPVEVRAERRQALAIRWLIDASRKRGENTMQERLSNELMDAVNNRGSAVKKREDTHRMAEANKAFSHYRW</sequence>
<gene>
    <name evidence="1" type="primary">rpsG</name>
    <name type="ordered locus">GOX0383</name>
</gene>